<keyword id="KW-0687">Ribonucleoprotein</keyword>
<keyword id="KW-0689">Ribosomal protein</keyword>
<keyword id="KW-0694">RNA-binding</keyword>
<keyword id="KW-0699">rRNA-binding</keyword>
<keyword id="KW-0820">tRNA-binding</keyword>
<name>RS7_PECCP</name>
<accession>C6DG81</accession>
<dbReference type="EMBL" id="CP001657">
    <property type="protein sequence ID" value="ACT14844.1"/>
    <property type="molecule type" value="Genomic_DNA"/>
</dbReference>
<dbReference type="RefSeq" id="WP_009111198.1">
    <property type="nucleotide sequence ID" value="NC_012917.1"/>
</dbReference>
<dbReference type="SMR" id="C6DG81"/>
<dbReference type="STRING" id="561230.PC1_3829"/>
<dbReference type="GeneID" id="97765865"/>
<dbReference type="KEGG" id="pct:PC1_3829"/>
<dbReference type="eggNOG" id="COG0049">
    <property type="taxonomic scope" value="Bacteria"/>
</dbReference>
<dbReference type="HOGENOM" id="CLU_072226_1_1_6"/>
<dbReference type="OrthoDB" id="9807653at2"/>
<dbReference type="Proteomes" id="UP000002736">
    <property type="component" value="Chromosome"/>
</dbReference>
<dbReference type="GO" id="GO:0015935">
    <property type="term" value="C:small ribosomal subunit"/>
    <property type="evidence" value="ECO:0007669"/>
    <property type="project" value="InterPro"/>
</dbReference>
<dbReference type="GO" id="GO:0019843">
    <property type="term" value="F:rRNA binding"/>
    <property type="evidence" value="ECO:0007669"/>
    <property type="project" value="UniProtKB-UniRule"/>
</dbReference>
<dbReference type="GO" id="GO:0003735">
    <property type="term" value="F:structural constituent of ribosome"/>
    <property type="evidence" value="ECO:0007669"/>
    <property type="project" value="InterPro"/>
</dbReference>
<dbReference type="GO" id="GO:0000049">
    <property type="term" value="F:tRNA binding"/>
    <property type="evidence" value="ECO:0007669"/>
    <property type="project" value="UniProtKB-UniRule"/>
</dbReference>
<dbReference type="GO" id="GO:0006412">
    <property type="term" value="P:translation"/>
    <property type="evidence" value="ECO:0007669"/>
    <property type="project" value="UniProtKB-UniRule"/>
</dbReference>
<dbReference type="CDD" id="cd14869">
    <property type="entry name" value="uS7_Bacteria"/>
    <property type="match status" value="1"/>
</dbReference>
<dbReference type="FunFam" id="1.10.455.10:FF:000001">
    <property type="entry name" value="30S ribosomal protein S7"/>
    <property type="match status" value="1"/>
</dbReference>
<dbReference type="Gene3D" id="1.10.455.10">
    <property type="entry name" value="Ribosomal protein S7 domain"/>
    <property type="match status" value="1"/>
</dbReference>
<dbReference type="HAMAP" id="MF_00480_B">
    <property type="entry name" value="Ribosomal_uS7_B"/>
    <property type="match status" value="1"/>
</dbReference>
<dbReference type="InterPro" id="IPR000235">
    <property type="entry name" value="Ribosomal_uS7"/>
</dbReference>
<dbReference type="InterPro" id="IPR005717">
    <property type="entry name" value="Ribosomal_uS7_bac/org-type"/>
</dbReference>
<dbReference type="InterPro" id="IPR020606">
    <property type="entry name" value="Ribosomal_uS7_CS"/>
</dbReference>
<dbReference type="InterPro" id="IPR023798">
    <property type="entry name" value="Ribosomal_uS7_dom"/>
</dbReference>
<dbReference type="InterPro" id="IPR036823">
    <property type="entry name" value="Ribosomal_uS7_dom_sf"/>
</dbReference>
<dbReference type="NCBIfam" id="TIGR01029">
    <property type="entry name" value="rpsG_bact"/>
    <property type="match status" value="1"/>
</dbReference>
<dbReference type="PANTHER" id="PTHR11205">
    <property type="entry name" value="RIBOSOMAL PROTEIN S7"/>
    <property type="match status" value="1"/>
</dbReference>
<dbReference type="Pfam" id="PF00177">
    <property type="entry name" value="Ribosomal_S7"/>
    <property type="match status" value="1"/>
</dbReference>
<dbReference type="PIRSF" id="PIRSF002122">
    <property type="entry name" value="RPS7p_RPS7a_RPS5e_RPS7o"/>
    <property type="match status" value="1"/>
</dbReference>
<dbReference type="SUPFAM" id="SSF47973">
    <property type="entry name" value="Ribosomal protein S7"/>
    <property type="match status" value="1"/>
</dbReference>
<dbReference type="PROSITE" id="PS00052">
    <property type="entry name" value="RIBOSOMAL_S7"/>
    <property type="match status" value="1"/>
</dbReference>
<evidence type="ECO:0000255" key="1">
    <source>
        <dbReference type="HAMAP-Rule" id="MF_00480"/>
    </source>
</evidence>
<evidence type="ECO:0000305" key="2"/>
<organism>
    <name type="scientific">Pectobacterium carotovorum subsp. carotovorum (strain PC1)</name>
    <dbReference type="NCBI Taxonomy" id="561230"/>
    <lineage>
        <taxon>Bacteria</taxon>
        <taxon>Pseudomonadati</taxon>
        <taxon>Pseudomonadota</taxon>
        <taxon>Gammaproteobacteria</taxon>
        <taxon>Enterobacterales</taxon>
        <taxon>Pectobacteriaceae</taxon>
        <taxon>Pectobacterium</taxon>
    </lineage>
</organism>
<gene>
    <name evidence="1" type="primary">rpsG</name>
    <name type="ordered locus">PC1_3829</name>
</gene>
<proteinExistence type="inferred from homology"/>
<reference key="1">
    <citation type="submission" date="2009-07" db="EMBL/GenBank/DDBJ databases">
        <title>Complete sequence of Pectobacterium carotovorum subsp. carotovorum PC1.</title>
        <authorList>
            <consortium name="US DOE Joint Genome Institute"/>
            <person name="Lucas S."/>
            <person name="Copeland A."/>
            <person name="Lapidus A."/>
            <person name="Glavina del Rio T."/>
            <person name="Tice H."/>
            <person name="Bruce D."/>
            <person name="Goodwin L."/>
            <person name="Pitluck S."/>
            <person name="Munk A.C."/>
            <person name="Brettin T."/>
            <person name="Detter J.C."/>
            <person name="Han C."/>
            <person name="Tapia R."/>
            <person name="Larimer F."/>
            <person name="Land M."/>
            <person name="Hauser L."/>
            <person name="Kyrpides N."/>
            <person name="Mikhailova N."/>
            <person name="Balakrishnan V."/>
            <person name="Glasner J."/>
            <person name="Perna N.T."/>
        </authorList>
    </citation>
    <scope>NUCLEOTIDE SEQUENCE [LARGE SCALE GENOMIC DNA]</scope>
    <source>
        <strain>PC1</strain>
    </source>
</reference>
<protein>
    <recommendedName>
        <fullName evidence="1">Small ribosomal subunit protein uS7</fullName>
    </recommendedName>
    <alternativeName>
        <fullName evidence="2">30S ribosomal protein S7</fullName>
    </alternativeName>
</protein>
<feature type="chain" id="PRO_1000206411" description="Small ribosomal subunit protein uS7">
    <location>
        <begin position="1"/>
        <end position="156"/>
    </location>
</feature>
<comment type="function">
    <text evidence="1">One of the primary rRNA binding proteins, it binds directly to 16S rRNA where it nucleates assembly of the head domain of the 30S subunit. Is located at the subunit interface close to the decoding center, probably blocks exit of the E-site tRNA.</text>
</comment>
<comment type="subunit">
    <text evidence="1">Part of the 30S ribosomal subunit. Contacts proteins S9 and S11.</text>
</comment>
<comment type="similarity">
    <text evidence="1">Belongs to the universal ribosomal protein uS7 family.</text>
</comment>
<sequence length="156" mass="17624">MPRRRVIGQRKILPDPKFGSELLAKFVNILMVDGKKSTAEAIVYTALETLAQRSGKDHLEAFEVALDNVRPTVEVKSRRVGGSTYQVPVEVRPVRRNALAMRWIVEAARKRGDKSMALRLANELSDAAENKGTAVKKREDVHRMAEANKAFAHYRW</sequence>